<organism>
    <name type="scientific">Thermoproteus tenax virus 1 (strain KRA1)</name>
    <name type="common">TTV1</name>
    <dbReference type="NCBI Taxonomy" id="10480"/>
    <lineage>
        <taxon>Viruses</taxon>
        <taxon>Adnaviria</taxon>
        <taxon>Zilligvirae</taxon>
        <taxon>Taleaviricota</taxon>
        <taxon>Tokiviricetes</taxon>
        <taxon>Primavirales</taxon>
        <taxon>Tristromaviridae</taxon>
        <taxon>Betatristromavirus</taxon>
        <taxon>Betatristromavirus TTV1</taxon>
    </lineage>
</organism>
<keyword id="KW-1185">Reference proteome</keyword>
<organismHost>
    <name type="scientific">Thermoproteus tenax</name>
    <dbReference type="NCBI Taxonomy" id="2271"/>
</organismHost>
<protein>
    <recommendedName>
        <fullName>Uncharacterized 8.9 kDa protein</fullName>
    </recommendedName>
</protein>
<accession>P19281</accession>
<sequence>MRHAPSYLSRLFTIVDFYWDFSMIRPICTIWTYSISCTYGIYLLILIYRIFSIFGLDYYHDSLLYSLIFLFYC</sequence>
<feature type="chain" id="PRO_0000222963" description="Uncharacterized 8.9 kDa protein">
    <location>
        <begin position="1"/>
        <end position="73"/>
    </location>
</feature>
<name>YOR6_TTV1K</name>
<proteinExistence type="predicted"/>
<dbReference type="EMBL" id="X14855">
    <property type="protein sequence ID" value="CAA32975.1"/>
    <property type="molecule type" value="Genomic_DNA"/>
</dbReference>
<dbReference type="SMR" id="P19281"/>
<dbReference type="Proteomes" id="UP000009250">
    <property type="component" value="Genome"/>
</dbReference>
<reference key="1">
    <citation type="submission" date="1989-03" db="EMBL/GenBank/DDBJ databases">
        <authorList>
            <person name="Neumann H."/>
        </authorList>
    </citation>
    <scope>NUCLEOTIDE SEQUENCE [GENOMIC DNA]</scope>
</reference>